<keyword id="KW-0030">Aminoacyl-tRNA synthetase</keyword>
<keyword id="KW-0067">ATP-binding</keyword>
<keyword id="KW-0963">Cytoplasm</keyword>
<keyword id="KW-0436">Ligase</keyword>
<keyword id="KW-0479">Metal-binding</keyword>
<keyword id="KW-0547">Nucleotide-binding</keyword>
<keyword id="KW-0648">Protein biosynthesis</keyword>
<keyword id="KW-0694">RNA-binding</keyword>
<keyword id="KW-0820">tRNA-binding</keyword>
<keyword id="KW-0862">Zinc</keyword>
<dbReference type="EC" id="6.1.1.3" evidence="1"/>
<dbReference type="EMBL" id="CP000964">
    <property type="protein sequence ID" value="ACI11175.1"/>
    <property type="molecule type" value="Genomic_DNA"/>
</dbReference>
<dbReference type="SMR" id="B5XQC6"/>
<dbReference type="KEGG" id="kpe:KPK_2138"/>
<dbReference type="HOGENOM" id="CLU_008554_0_1_6"/>
<dbReference type="Proteomes" id="UP000001734">
    <property type="component" value="Chromosome"/>
</dbReference>
<dbReference type="GO" id="GO:0005829">
    <property type="term" value="C:cytosol"/>
    <property type="evidence" value="ECO:0007669"/>
    <property type="project" value="TreeGrafter"/>
</dbReference>
<dbReference type="GO" id="GO:0005524">
    <property type="term" value="F:ATP binding"/>
    <property type="evidence" value="ECO:0007669"/>
    <property type="project" value="UniProtKB-UniRule"/>
</dbReference>
<dbReference type="GO" id="GO:0046872">
    <property type="term" value="F:metal ion binding"/>
    <property type="evidence" value="ECO:0007669"/>
    <property type="project" value="UniProtKB-KW"/>
</dbReference>
<dbReference type="GO" id="GO:0004829">
    <property type="term" value="F:threonine-tRNA ligase activity"/>
    <property type="evidence" value="ECO:0007669"/>
    <property type="project" value="UniProtKB-UniRule"/>
</dbReference>
<dbReference type="GO" id="GO:0000049">
    <property type="term" value="F:tRNA binding"/>
    <property type="evidence" value="ECO:0007669"/>
    <property type="project" value="UniProtKB-KW"/>
</dbReference>
<dbReference type="GO" id="GO:0006435">
    <property type="term" value="P:threonyl-tRNA aminoacylation"/>
    <property type="evidence" value="ECO:0007669"/>
    <property type="project" value="UniProtKB-UniRule"/>
</dbReference>
<dbReference type="CDD" id="cd01667">
    <property type="entry name" value="TGS_ThrRS"/>
    <property type="match status" value="1"/>
</dbReference>
<dbReference type="CDD" id="cd00860">
    <property type="entry name" value="ThrRS_anticodon"/>
    <property type="match status" value="1"/>
</dbReference>
<dbReference type="CDD" id="cd00771">
    <property type="entry name" value="ThrRS_core"/>
    <property type="match status" value="1"/>
</dbReference>
<dbReference type="FunFam" id="3.10.20.30:FF:000005">
    <property type="entry name" value="Threonine--tRNA ligase"/>
    <property type="match status" value="1"/>
</dbReference>
<dbReference type="FunFam" id="3.30.54.20:FF:000002">
    <property type="entry name" value="Threonine--tRNA ligase"/>
    <property type="match status" value="1"/>
</dbReference>
<dbReference type="FunFam" id="3.30.930.10:FF:000002">
    <property type="entry name" value="Threonine--tRNA ligase"/>
    <property type="match status" value="1"/>
</dbReference>
<dbReference type="FunFam" id="3.40.50.800:FF:000001">
    <property type="entry name" value="Threonine--tRNA ligase"/>
    <property type="match status" value="1"/>
</dbReference>
<dbReference type="FunFam" id="3.30.980.10:FF:000005">
    <property type="entry name" value="Threonyl-tRNA synthetase, mitochondrial"/>
    <property type="match status" value="1"/>
</dbReference>
<dbReference type="Gene3D" id="3.10.20.30">
    <property type="match status" value="1"/>
</dbReference>
<dbReference type="Gene3D" id="3.30.54.20">
    <property type="match status" value="1"/>
</dbReference>
<dbReference type="Gene3D" id="3.40.50.800">
    <property type="entry name" value="Anticodon-binding domain"/>
    <property type="match status" value="1"/>
</dbReference>
<dbReference type="Gene3D" id="3.30.930.10">
    <property type="entry name" value="Bira Bifunctional Protein, Domain 2"/>
    <property type="match status" value="1"/>
</dbReference>
<dbReference type="Gene3D" id="3.30.980.10">
    <property type="entry name" value="Threonyl-trna Synthetase, Chain A, domain 2"/>
    <property type="match status" value="1"/>
</dbReference>
<dbReference type="HAMAP" id="MF_00184">
    <property type="entry name" value="Thr_tRNA_synth"/>
    <property type="match status" value="1"/>
</dbReference>
<dbReference type="InterPro" id="IPR002314">
    <property type="entry name" value="aa-tRNA-synt_IIb"/>
</dbReference>
<dbReference type="InterPro" id="IPR006195">
    <property type="entry name" value="aa-tRNA-synth_II"/>
</dbReference>
<dbReference type="InterPro" id="IPR045864">
    <property type="entry name" value="aa-tRNA-synth_II/BPL/LPL"/>
</dbReference>
<dbReference type="InterPro" id="IPR004154">
    <property type="entry name" value="Anticodon-bd"/>
</dbReference>
<dbReference type="InterPro" id="IPR036621">
    <property type="entry name" value="Anticodon-bd_dom_sf"/>
</dbReference>
<dbReference type="InterPro" id="IPR012675">
    <property type="entry name" value="Beta-grasp_dom_sf"/>
</dbReference>
<dbReference type="InterPro" id="IPR004095">
    <property type="entry name" value="TGS"/>
</dbReference>
<dbReference type="InterPro" id="IPR012676">
    <property type="entry name" value="TGS-like"/>
</dbReference>
<dbReference type="InterPro" id="IPR002320">
    <property type="entry name" value="Thr-tRNA-ligase_IIa"/>
</dbReference>
<dbReference type="InterPro" id="IPR018163">
    <property type="entry name" value="Thr/Ala-tRNA-synth_IIc_edit"/>
</dbReference>
<dbReference type="InterPro" id="IPR047246">
    <property type="entry name" value="ThrRS_anticodon"/>
</dbReference>
<dbReference type="InterPro" id="IPR033728">
    <property type="entry name" value="ThrRS_core"/>
</dbReference>
<dbReference type="InterPro" id="IPR012947">
    <property type="entry name" value="tRNA_SAD"/>
</dbReference>
<dbReference type="NCBIfam" id="TIGR00418">
    <property type="entry name" value="thrS"/>
    <property type="match status" value="1"/>
</dbReference>
<dbReference type="PANTHER" id="PTHR11451:SF44">
    <property type="entry name" value="THREONINE--TRNA LIGASE, CHLOROPLASTIC_MITOCHONDRIAL 2"/>
    <property type="match status" value="1"/>
</dbReference>
<dbReference type="PANTHER" id="PTHR11451">
    <property type="entry name" value="THREONINE-TRNA LIGASE"/>
    <property type="match status" value="1"/>
</dbReference>
<dbReference type="Pfam" id="PF03129">
    <property type="entry name" value="HGTP_anticodon"/>
    <property type="match status" value="1"/>
</dbReference>
<dbReference type="Pfam" id="PF02824">
    <property type="entry name" value="TGS"/>
    <property type="match status" value="1"/>
</dbReference>
<dbReference type="Pfam" id="PF00587">
    <property type="entry name" value="tRNA-synt_2b"/>
    <property type="match status" value="1"/>
</dbReference>
<dbReference type="Pfam" id="PF07973">
    <property type="entry name" value="tRNA_SAD"/>
    <property type="match status" value="1"/>
</dbReference>
<dbReference type="PRINTS" id="PR01047">
    <property type="entry name" value="TRNASYNTHTHR"/>
</dbReference>
<dbReference type="SMART" id="SM00863">
    <property type="entry name" value="tRNA_SAD"/>
    <property type="match status" value="1"/>
</dbReference>
<dbReference type="SUPFAM" id="SSF52954">
    <property type="entry name" value="Class II aaRS ABD-related"/>
    <property type="match status" value="1"/>
</dbReference>
<dbReference type="SUPFAM" id="SSF55681">
    <property type="entry name" value="Class II aaRS and biotin synthetases"/>
    <property type="match status" value="1"/>
</dbReference>
<dbReference type="SUPFAM" id="SSF81271">
    <property type="entry name" value="TGS-like"/>
    <property type="match status" value="1"/>
</dbReference>
<dbReference type="SUPFAM" id="SSF55186">
    <property type="entry name" value="ThrRS/AlaRS common domain"/>
    <property type="match status" value="1"/>
</dbReference>
<dbReference type="PROSITE" id="PS50862">
    <property type="entry name" value="AA_TRNA_LIGASE_II"/>
    <property type="match status" value="1"/>
</dbReference>
<dbReference type="PROSITE" id="PS51880">
    <property type="entry name" value="TGS"/>
    <property type="match status" value="1"/>
</dbReference>
<accession>B5XQC6</accession>
<reference key="1">
    <citation type="journal article" date="2008" name="PLoS Genet.">
        <title>Complete genome sequence of the N2-fixing broad host range endophyte Klebsiella pneumoniae 342 and virulence predictions verified in mice.</title>
        <authorList>
            <person name="Fouts D.E."/>
            <person name="Tyler H.L."/>
            <person name="DeBoy R.T."/>
            <person name="Daugherty S."/>
            <person name="Ren Q."/>
            <person name="Badger J.H."/>
            <person name="Durkin A.S."/>
            <person name="Huot H."/>
            <person name="Shrivastava S."/>
            <person name="Kothari S."/>
            <person name="Dodson R.J."/>
            <person name="Mohamoud Y."/>
            <person name="Khouri H."/>
            <person name="Roesch L.F.W."/>
            <person name="Krogfelt K.A."/>
            <person name="Struve C."/>
            <person name="Triplett E.W."/>
            <person name="Methe B.A."/>
        </authorList>
    </citation>
    <scope>NUCLEOTIDE SEQUENCE [LARGE SCALE GENOMIC DNA]</scope>
    <source>
        <strain>342</strain>
    </source>
</reference>
<comment type="function">
    <text evidence="1">Catalyzes the attachment of threonine to tRNA(Thr) in a two-step reaction: L-threonine is first activated by ATP to form Thr-AMP and then transferred to the acceptor end of tRNA(Thr). Also edits incorrectly charged L-seryl-tRNA(Thr).</text>
</comment>
<comment type="catalytic activity">
    <reaction evidence="1">
        <text>tRNA(Thr) + L-threonine + ATP = L-threonyl-tRNA(Thr) + AMP + diphosphate + H(+)</text>
        <dbReference type="Rhea" id="RHEA:24624"/>
        <dbReference type="Rhea" id="RHEA-COMP:9670"/>
        <dbReference type="Rhea" id="RHEA-COMP:9704"/>
        <dbReference type="ChEBI" id="CHEBI:15378"/>
        <dbReference type="ChEBI" id="CHEBI:30616"/>
        <dbReference type="ChEBI" id="CHEBI:33019"/>
        <dbReference type="ChEBI" id="CHEBI:57926"/>
        <dbReference type="ChEBI" id="CHEBI:78442"/>
        <dbReference type="ChEBI" id="CHEBI:78534"/>
        <dbReference type="ChEBI" id="CHEBI:456215"/>
        <dbReference type="EC" id="6.1.1.3"/>
    </reaction>
</comment>
<comment type="cofactor">
    <cofactor evidence="1">
        <name>Zn(2+)</name>
        <dbReference type="ChEBI" id="CHEBI:29105"/>
    </cofactor>
    <text evidence="1">Binds 1 zinc ion per subunit.</text>
</comment>
<comment type="subunit">
    <text evidence="1">Homodimer.</text>
</comment>
<comment type="subcellular location">
    <subcellularLocation>
        <location evidence="1">Cytoplasm</location>
    </subcellularLocation>
</comment>
<comment type="similarity">
    <text evidence="1">Belongs to the class-II aminoacyl-tRNA synthetase family.</text>
</comment>
<proteinExistence type="inferred from homology"/>
<name>SYT_KLEP3</name>
<gene>
    <name evidence="1" type="primary">thrS</name>
    <name type="ordered locus">KPK_2138</name>
</gene>
<feature type="chain" id="PRO_1000098580" description="Threonine--tRNA ligase">
    <location>
        <begin position="1"/>
        <end position="642"/>
    </location>
</feature>
<feature type="domain" description="TGS" evidence="2">
    <location>
        <begin position="1"/>
        <end position="61"/>
    </location>
</feature>
<feature type="region of interest" description="Catalytic" evidence="1">
    <location>
        <begin position="243"/>
        <end position="534"/>
    </location>
</feature>
<feature type="binding site" evidence="1">
    <location>
        <position position="334"/>
    </location>
    <ligand>
        <name>Zn(2+)</name>
        <dbReference type="ChEBI" id="CHEBI:29105"/>
    </ligand>
</feature>
<feature type="binding site" evidence="1">
    <location>
        <position position="385"/>
    </location>
    <ligand>
        <name>Zn(2+)</name>
        <dbReference type="ChEBI" id="CHEBI:29105"/>
    </ligand>
</feature>
<feature type="binding site" evidence="1">
    <location>
        <position position="511"/>
    </location>
    <ligand>
        <name>Zn(2+)</name>
        <dbReference type="ChEBI" id="CHEBI:29105"/>
    </ligand>
</feature>
<organism>
    <name type="scientific">Klebsiella pneumoniae (strain 342)</name>
    <dbReference type="NCBI Taxonomy" id="507522"/>
    <lineage>
        <taxon>Bacteria</taxon>
        <taxon>Pseudomonadati</taxon>
        <taxon>Pseudomonadota</taxon>
        <taxon>Gammaproteobacteria</taxon>
        <taxon>Enterobacterales</taxon>
        <taxon>Enterobacteriaceae</taxon>
        <taxon>Klebsiella/Raoultella group</taxon>
        <taxon>Klebsiella</taxon>
        <taxon>Klebsiella pneumoniae complex</taxon>
    </lineage>
</organism>
<protein>
    <recommendedName>
        <fullName evidence="1">Threonine--tRNA ligase</fullName>
        <ecNumber evidence="1">6.1.1.3</ecNumber>
    </recommendedName>
    <alternativeName>
        <fullName evidence="1">Threonyl-tRNA synthetase</fullName>
        <shortName evidence="1">ThrRS</shortName>
    </alternativeName>
</protein>
<evidence type="ECO:0000255" key="1">
    <source>
        <dbReference type="HAMAP-Rule" id="MF_00184"/>
    </source>
</evidence>
<evidence type="ECO:0000255" key="2">
    <source>
        <dbReference type="PROSITE-ProRule" id="PRU01228"/>
    </source>
</evidence>
<sequence>MPVITLPDGSQRHFDHAVSPMDVALDIGPGLAKATIAGRVNGELVDACDPIETDSTLSIITAKDEEGLEIIRHSCAHLLGHAIKQLWPNTKMAIGPVVDNGFYYDVDLDHTLTQEDIDALEKRMHELAEKNYDVIKKKVSWHEARETFVKRGETYKVSILDENIAHDDKPGLYHHEEYIDMCRGPHVPNMRFCHHFKLMKTAGAYWRGDSNNKMLQRIYGTAWADKKALNAYLQRLEEAAKRDHRKIGKQLDLYHMQEEAPGMVFWHNDGWTIFRELETFVRSKLKEYQYQEVKGPFMMDRVLWEKTGHWDNYKDAMFTTSSENREYCIKPMNCPGHVQIFNQGLKSYRDLPLRMAEFGSCHRNEPSGALHGLMRVRGFTQDDAHIFCTEDQVRDEVNACIRMVYDMYSTFGFEKIVVKLSTRPEKRIGSDETWDRAEADLAVALEENNIPFEYQLGEGAFYGPKIEFTLYDCLDRAWQCGTVQLDFSLPQRLSASYVGENNERQVPVMIHRAILGSLERFIGILTEEFAGFFPTWIAPVQVVVMNITDSQAEYVNELTRKLQNAGIRVKADLRNEKIGFKIREHTLRRVPYMLVCGDKEVEAGKVAVRTRRGKDLGSMDVSEVIEKLQQEIRSRSLQQLEE</sequence>